<accession>B0CB14</accession>
<feature type="chain" id="PRO_0000339919" description="Photosystem II protein D1 1">
    <location>
        <begin position="1"/>
        <end position="348"/>
    </location>
</feature>
<feature type="propeptide" id="PRO_0000339920" evidence="1">
    <location>
        <begin position="349"/>
        <end position="363"/>
    </location>
</feature>
<feature type="transmembrane region" description="Helical" evidence="1">
    <location>
        <begin position="32"/>
        <end position="49"/>
    </location>
</feature>
<feature type="transmembrane region" description="Helical" evidence="1">
    <location>
        <begin position="121"/>
        <end position="136"/>
    </location>
</feature>
<feature type="transmembrane region" description="Helical" evidence="1">
    <location>
        <begin position="145"/>
        <end position="159"/>
    </location>
</feature>
<feature type="transmembrane region" description="Helical" evidence="1">
    <location>
        <begin position="200"/>
        <end position="221"/>
    </location>
</feature>
<feature type="transmembrane region" description="Helical" evidence="1">
    <location>
        <begin position="278"/>
        <end position="292"/>
    </location>
</feature>
<feature type="binding site" description="axial binding residue" evidence="1">
    <location>
        <position position="121"/>
    </location>
    <ligand>
        <name>chlorophyll a</name>
        <dbReference type="ChEBI" id="CHEBI:58416"/>
        <label>ChlzD1</label>
    </ligand>
    <ligandPart>
        <name>Mg</name>
        <dbReference type="ChEBI" id="CHEBI:25107"/>
    </ligandPart>
</feature>
<feature type="binding site" evidence="1">
    <location>
        <position position="129"/>
    </location>
    <ligand>
        <name>pheophytin a</name>
        <dbReference type="ChEBI" id="CHEBI:136840"/>
        <label>D1</label>
    </ligand>
</feature>
<feature type="binding site" evidence="1">
    <location>
        <position position="173"/>
    </location>
    <ligand>
        <name>[CaMn4O5] cluster</name>
        <dbReference type="ChEBI" id="CHEBI:189552"/>
    </ligand>
</feature>
<feature type="binding site" evidence="1">
    <location>
        <position position="192"/>
    </location>
    <ligand>
        <name>[CaMn4O5] cluster</name>
        <dbReference type="ChEBI" id="CHEBI:189552"/>
    </ligand>
</feature>
<feature type="binding site" description="axial binding residue" evidence="1">
    <location>
        <position position="201"/>
    </location>
    <ligand>
        <name>chlorophyll a</name>
        <dbReference type="ChEBI" id="CHEBI:58416"/>
        <label>PD1</label>
    </ligand>
    <ligandPart>
        <name>Mg</name>
        <dbReference type="ChEBI" id="CHEBI:25107"/>
    </ligandPart>
</feature>
<feature type="binding site" evidence="1">
    <location>
        <position position="218"/>
    </location>
    <ligand>
        <name>a quinone</name>
        <dbReference type="ChEBI" id="CHEBI:132124"/>
        <label>B</label>
    </ligand>
</feature>
<feature type="binding site" evidence="1">
    <location>
        <position position="218"/>
    </location>
    <ligand>
        <name>Fe cation</name>
        <dbReference type="ChEBI" id="CHEBI:24875"/>
        <note>ligand shared with heterodimeric partner</note>
    </ligand>
</feature>
<feature type="binding site" evidence="1">
    <location>
        <begin position="268"/>
        <end position="269"/>
    </location>
    <ligand>
        <name>a quinone</name>
        <dbReference type="ChEBI" id="CHEBI:132124"/>
        <label>B</label>
    </ligand>
</feature>
<feature type="binding site" evidence="1">
    <location>
        <position position="276"/>
    </location>
    <ligand>
        <name>Fe cation</name>
        <dbReference type="ChEBI" id="CHEBI:24875"/>
        <note>ligand shared with heterodimeric partner</note>
    </ligand>
</feature>
<feature type="binding site" evidence="1">
    <location>
        <position position="336"/>
    </location>
    <ligand>
        <name>[CaMn4O5] cluster</name>
        <dbReference type="ChEBI" id="CHEBI:189552"/>
    </ligand>
</feature>
<feature type="binding site" evidence="1">
    <location>
        <position position="348"/>
    </location>
    <ligand>
        <name>[CaMn4O5] cluster</name>
        <dbReference type="ChEBI" id="CHEBI:189552"/>
    </ligand>
</feature>
<feature type="site" description="Tyrosine radical intermediate" evidence="1">
    <location>
        <position position="164"/>
    </location>
</feature>
<feature type="site" description="Stabilizes free radical intermediate" evidence="1">
    <location>
        <position position="193"/>
    </location>
</feature>
<feature type="site" description="Cleavage; by CtpA" evidence="1">
    <location>
        <begin position="348"/>
        <end position="349"/>
    </location>
</feature>
<comment type="function">
    <text evidence="1">Photosystem II (PSII) is a light-driven water:plastoquinone oxidoreductase that uses light energy to abstract electrons from H(2)O, generating O(2) and a proton gradient subsequently used for ATP formation. It consists of a core antenna complex that captures photons, and an electron transfer chain that converts photonic excitation into a charge separation. The D1/D2 (PsbA/PsbD) reaction center heterodimer binds P680, the primary electron donor of PSII as well as several subsequent electron acceptors.</text>
</comment>
<comment type="catalytic activity">
    <reaction evidence="1">
        <text>2 a plastoquinone + 4 hnu + 2 H2O = 2 a plastoquinol + O2</text>
        <dbReference type="Rhea" id="RHEA:36359"/>
        <dbReference type="Rhea" id="RHEA-COMP:9561"/>
        <dbReference type="Rhea" id="RHEA-COMP:9562"/>
        <dbReference type="ChEBI" id="CHEBI:15377"/>
        <dbReference type="ChEBI" id="CHEBI:15379"/>
        <dbReference type="ChEBI" id="CHEBI:17757"/>
        <dbReference type="ChEBI" id="CHEBI:30212"/>
        <dbReference type="ChEBI" id="CHEBI:62192"/>
        <dbReference type="EC" id="1.10.3.9"/>
    </reaction>
</comment>
<comment type="cofactor">
    <text evidence="1">The D1/D2 heterodimer binds P680, chlorophylls that are the primary electron donor of PSII, and subsequent electron acceptors. It shares a non-heme iron and each subunit binds pheophytin, quinone, additional chlorophylls, carotenoids and lipids. D1 provides most of the ligands for the Mn4-Ca-O5 cluster of the oxygen-evolving complex (OEC). There is also a Cl(-1) ion associated with D1 and D2, which is required for oxygen evolution. The PSII complex binds additional chlorophylls, carotenoids and specific lipids.</text>
</comment>
<comment type="subunit">
    <text evidence="1">PSII is composed of 1 copy each of membrane proteins PsbA, PsbB, PsbC, PsbD, PsbE, PsbF, PsbH, PsbI, PsbJ, PsbK, PsbL, PsbM, PsbT, PsbX, PsbY, PsbZ, Psb30/Ycf12, peripheral proteins PsbO, CyanoQ (PsbQ), PsbU, PsbV and a large number of cofactors. It forms dimeric complexes.</text>
</comment>
<comment type="subcellular location">
    <subcellularLocation>
        <location evidence="1">Cellular thylakoid membrane</location>
        <topology evidence="1">Multi-pass membrane protein</topology>
    </subcellularLocation>
</comment>
<comment type="PTM">
    <text evidence="1">Tyr-164 forms a radical intermediate that is referred to as redox-active TyrZ, YZ or Y-Z.</text>
</comment>
<comment type="PTM">
    <text evidence="1">C-terminally processed by CtpA; processing is essential to allow assembly of the oxygen-evolving complex and thus photosynthetic growth.</text>
</comment>
<comment type="miscellaneous">
    <text evidence="1">Cyanobacteria usually contain more than 2 copies of the psbA gene.</text>
</comment>
<comment type="miscellaneous">
    <text evidence="1">2 of the reaction center chlorophylls (ChlD1 and ChlD2) are entirely coordinated by water.</text>
</comment>
<comment type="miscellaneous">
    <text evidence="1">Herbicides such as atrazine, BNT, diuron or ioxynil bind in the Q(B) binding site and block subsequent electron transfer.</text>
</comment>
<comment type="similarity">
    <text evidence="1">Belongs to the reaction center PufL/M/PsbA/D family.</text>
</comment>
<comment type="caution">
    <text evidence="2">This copy of psbA is missing some conserved residues important for binding the Mn4-Ca-O5 cluster.</text>
</comment>
<evidence type="ECO:0000255" key="1">
    <source>
        <dbReference type="HAMAP-Rule" id="MF_01379"/>
    </source>
</evidence>
<evidence type="ECO:0000305" key="2"/>
<organism>
    <name type="scientific">Acaryochloris marina (strain MBIC 11017)</name>
    <dbReference type="NCBI Taxonomy" id="329726"/>
    <lineage>
        <taxon>Bacteria</taxon>
        <taxon>Bacillati</taxon>
        <taxon>Cyanobacteriota</taxon>
        <taxon>Cyanophyceae</taxon>
        <taxon>Acaryochloridales</taxon>
        <taxon>Acaryochloridaceae</taxon>
        <taxon>Acaryochloris</taxon>
    </lineage>
</organism>
<keyword id="KW-0106">Calcium</keyword>
<keyword id="KW-0148">Chlorophyll</keyword>
<keyword id="KW-0157">Chromophore</keyword>
<keyword id="KW-0249">Electron transport</keyword>
<keyword id="KW-0359">Herbicide resistance</keyword>
<keyword id="KW-0408">Iron</keyword>
<keyword id="KW-0460">Magnesium</keyword>
<keyword id="KW-0464">Manganese</keyword>
<keyword id="KW-0472">Membrane</keyword>
<keyword id="KW-0479">Metal-binding</keyword>
<keyword id="KW-0560">Oxidoreductase</keyword>
<keyword id="KW-0602">Photosynthesis</keyword>
<keyword id="KW-0604">Photosystem II</keyword>
<keyword id="KW-1185">Reference proteome</keyword>
<keyword id="KW-0793">Thylakoid</keyword>
<keyword id="KW-0812">Transmembrane</keyword>
<keyword id="KW-1133">Transmembrane helix</keyword>
<keyword id="KW-0813">Transport</keyword>
<dbReference type="EC" id="1.10.3.9" evidence="1"/>
<dbReference type="EMBL" id="CP000828">
    <property type="protein sequence ID" value="ABW25504.1"/>
    <property type="molecule type" value="Genomic_DNA"/>
</dbReference>
<dbReference type="RefSeq" id="WP_012161111.1">
    <property type="nucleotide sequence ID" value="NC_009925.1"/>
</dbReference>
<dbReference type="SMR" id="B0CB14"/>
<dbReference type="STRING" id="329726.AM1_0448"/>
<dbReference type="KEGG" id="amr:AM1_0448"/>
<dbReference type="eggNOG" id="ENOG502Z9WG">
    <property type="taxonomic scope" value="Bacteria"/>
</dbReference>
<dbReference type="HOGENOM" id="CLU_054206_1_0_3"/>
<dbReference type="OrthoDB" id="505356at2"/>
<dbReference type="Proteomes" id="UP000000268">
    <property type="component" value="Chromosome"/>
</dbReference>
<dbReference type="GO" id="GO:0009523">
    <property type="term" value="C:photosystem II"/>
    <property type="evidence" value="ECO:0007669"/>
    <property type="project" value="UniProtKB-KW"/>
</dbReference>
<dbReference type="GO" id="GO:0031676">
    <property type="term" value="C:plasma membrane-derived thylakoid membrane"/>
    <property type="evidence" value="ECO:0007669"/>
    <property type="project" value="UniProtKB-SubCell"/>
</dbReference>
<dbReference type="GO" id="GO:0016168">
    <property type="term" value="F:chlorophyll binding"/>
    <property type="evidence" value="ECO:0007669"/>
    <property type="project" value="UniProtKB-UniRule"/>
</dbReference>
<dbReference type="GO" id="GO:0045156">
    <property type="term" value="F:electron transporter, transferring electrons within the cyclic electron transport pathway of photosynthesis activity"/>
    <property type="evidence" value="ECO:0007669"/>
    <property type="project" value="InterPro"/>
</dbReference>
<dbReference type="GO" id="GO:0005506">
    <property type="term" value="F:iron ion binding"/>
    <property type="evidence" value="ECO:0007669"/>
    <property type="project" value="UniProtKB-UniRule"/>
</dbReference>
<dbReference type="GO" id="GO:0016682">
    <property type="term" value="F:oxidoreductase activity, acting on diphenols and related substances as donors, oxygen as acceptor"/>
    <property type="evidence" value="ECO:0007669"/>
    <property type="project" value="UniProtKB-UniRule"/>
</dbReference>
<dbReference type="GO" id="GO:0010242">
    <property type="term" value="F:oxygen evolving activity"/>
    <property type="evidence" value="ECO:0007669"/>
    <property type="project" value="UniProtKB-EC"/>
</dbReference>
<dbReference type="GO" id="GO:0009772">
    <property type="term" value="P:photosynthetic electron transport in photosystem II"/>
    <property type="evidence" value="ECO:0007669"/>
    <property type="project" value="InterPro"/>
</dbReference>
<dbReference type="GO" id="GO:0009635">
    <property type="term" value="P:response to herbicide"/>
    <property type="evidence" value="ECO:0007669"/>
    <property type="project" value="UniProtKB-KW"/>
</dbReference>
<dbReference type="Gene3D" id="1.20.85.10">
    <property type="entry name" value="Photosystem II protein D1-like"/>
    <property type="match status" value="1"/>
</dbReference>
<dbReference type="HAMAP" id="MF_01379">
    <property type="entry name" value="PSII_PsbA_D1"/>
    <property type="match status" value="1"/>
</dbReference>
<dbReference type="InterPro" id="IPR055266">
    <property type="entry name" value="D1/D2"/>
</dbReference>
<dbReference type="InterPro" id="IPR036854">
    <property type="entry name" value="Photo_II_D1/D2_sf"/>
</dbReference>
<dbReference type="InterPro" id="IPR000484">
    <property type="entry name" value="Photo_RC_L/M"/>
</dbReference>
<dbReference type="InterPro" id="IPR055265">
    <property type="entry name" value="Photo_RC_L/M_CS"/>
</dbReference>
<dbReference type="InterPro" id="IPR005867">
    <property type="entry name" value="PSII_D1"/>
</dbReference>
<dbReference type="PANTHER" id="PTHR33149:SF12">
    <property type="entry name" value="PHOTOSYSTEM II D2 PROTEIN"/>
    <property type="match status" value="1"/>
</dbReference>
<dbReference type="PANTHER" id="PTHR33149">
    <property type="entry name" value="PHOTOSYSTEM II PROTEIN D1"/>
    <property type="match status" value="1"/>
</dbReference>
<dbReference type="Pfam" id="PF00124">
    <property type="entry name" value="Photo_RC"/>
    <property type="match status" value="1"/>
</dbReference>
<dbReference type="PRINTS" id="PR00256">
    <property type="entry name" value="REACTNCENTRE"/>
</dbReference>
<dbReference type="SUPFAM" id="SSF81483">
    <property type="entry name" value="Bacterial photosystem II reaction centre, L and M subunits"/>
    <property type="match status" value="1"/>
</dbReference>
<dbReference type="PROSITE" id="PS00244">
    <property type="entry name" value="REACTION_CENTER"/>
    <property type="match status" value="1"/>
</dbReference>
<protein>
    <recommendedName>
        <fullName evidence="1">Photosystem II protein D1 1</fullName>
        <shortName evidence="1">PSII D1 protein 1</shortName>
        <ecNumber evidence="1">1.10.3.9</ecNumber>
    </recommendedName>
    <alternativeName>
        <fullName evidence="1">Photosystem II Q(B) protein 1</fullName>
    </alternativeName>
</protein>
<reference key="1">
    <citation type="journal article" date="2008" name="Proc. Natl. Acad. Sci. U.S.A.">
        <title>Niche adaptation and genome expansion in the chlorophyll d-producing cyanobacterium Acaryochloris marina.</title>
        <authorList>
            <person name="Swingley W.D."/>
            <person name="Chen M."/>
            <person name="Cheung P.C."/>
            <person name="Conrad A.L."/>
            <person name="Dejesa L.C."/>
            <person name="Hao J."/>
            <person name="Honchak B.M."/>
            <person name="Karbach L.E."/>
            <person name="Kurdoglu A."/>
            <person name="Lahiri S."/>
            <person name="Mastrian S.D."/>
            <person name="Miyashita H."/>
            <person name="Page L."/>
            <person name="Ramakrishna P."/>
            <person name="Satoh S."/>
            <person name="Sattley W.M."/>
            <person name="Shimada Y."/>
            <person name="Taylor H.L."/>
            <person name="Tomo T."/>
            <person name="Tsuchiya T."/>
            <person name="Wang Z.T."/>
            <person name="Raymond J."/>
            <person name="Mimuro M."/>
            <person name="Blankenship R.E."/>
            <person name="Touchman J.W."/>
        </authorList>
    </citation>
    <scope>NUCLEOTIDE SEQUENCE [LARGE SCALE GENOMIC DNA]</scope>
    <source>
        <strain>MBIC 11017</strain>
    </source>
</reference>
<name>PSBA1_ACAM1</name>
<sequence length="363" mass="39721">MSTTFQTPSRLPTVSAWDQFCEWITSTHNRLYVGWFGLLMIPSLFVSAITFMLAWVAAPSVDMEGIREPIISSLLGGSNVITAAVIPTSAAIGLHLYPLWEATSMDEWLYNGGPYQLIILHFLIAIWTYLGRQWELSYRLGMRPWIAMAFSAPVAAATAVLLVYPMGQGSFSEGLPLGISGTFHFMMAVQAEHNILMHPFHMLGVVGVFGGAFLSAMHGSLVTSSLVQETSSLKSVNTGYKFGQQEATYNLLAGHAGYLGRLFIPDIAFRNSRSIHFLLAVLPTIGIWFAALGIGTMAFNLNGFNFNHSLLDSSGRPIRTEADLLNRATMGLQVMHSVNAHHFSLTLASTESKEIPTIPIMTS</sequence>
<gene>
    <name evidence="2" type="primary">psbA1</name>
    <name type="ordered locus">AM1_0448</name>
</gene>
<proteinExistence type="inferred from homology"/>